<organism evidence="8">
    <name type="scientific">Arabidopsis thaliana</name>
    <name type="common">Mouse-ear cress</name>
    <dbReference type="NCBI Taxonomy" id="3702"/>
    <lineage>
        <taxon>Eukaryota</taxon>
        <taxon>Viridiplantae</taxon>
        <taxon>Streptophyta</taxon>
        <taxon>Embryophyta</taxon>
        <taxon>Tracheophyta</taxon>
        <taxon>Spermatophyta</taxon>
        <taxon>Magnoliopsida</taxon>
        <taxon>eudicotyledons</taxon>
        <taxon>Gunneridae</taxon>
        <taxon>Pentapetalae</taxon>
        <taxon>rosids</taxon>
        <taxon>malvids</taxon>
        <taxon>Brassicales</taxon>
        <taxon>Brassicaceae</taxon>
        <taxon>Camelineae</taxon>
        <taxon>Arabidopsis</taxon>
    </lineage>
</organism>
<dbReference type="EC" id="3.2.1.14"/>
<dbReference type="EMBL" id="AC002333">
    <property type="protein sequence ID" value="AAB64048.1"/>
    <property type="molecule type" value="Genomic_DNA"/>
</dbReference>
<dbReference type="EMBL" id="AC002335">
    <property type="protein sequence ID" value="AAM14811.1"/>
    <property type="molecule type" value="Genomic_DNA"/>
</dbReference>
<dbReference type="EMBL" id="CP002685">
    <property type="protein sequence ID" value="AEC10292.1"/>
    <property type="molecule type" value="Genomic_DNA"/>
</dbReference>
<dbReference type="EMBL" id="AK118596">
    <property type="protein sequence ID" value="BAC43195.1"/>
    <property type="molecule type" value="mRNA"/>
</dbReference>
<dbReference type="EMBL" id="BT006229">
    <property type="protein sequence ID" value="AAP12878.1"/>
    <property type="molecule type" value="mRNA"/>
</dbReference>
<dbReference type="PIR" id="H84867">
    <property type="entry name" value="H84867"/>
</dbReference>
<dbReference type="RefSeq" id="NP_181886.1">
    <property type="nucleotide sequence ID" value="NM_129920.3"/>
</dbReference>
<dbReference type="SMR" id="O24598"/>
<dbReference type="FunCoup" id="O24598">
    <property type="interactions" value="136"/>
</dbReference>
<dbReference type="STRING" id="3702.O24598"/>
<dbReference type="CAZy" id="CBM18">
    <property type="family name" value="Carbohydrate-Binding Module Family 18"/>
</dbReference>
<dbReference type="CAZy" id="GH19">
    <property type="family name" value="Glycoside Hydrolase Family 19"/>
</dbReference>
<dbReference type="GlyGen" id="O24598">
    <property type="glycosylation" value="3 sites"/>
</dbReference>
<dbReference type="PaxDb" id="3702-AT2G43580.1"/>
<dbReference type="ProteomicsDB" id="240614"/>
<dbReference type="EnsemblPlants" id="AT2G43580.1">
    <property type="protein sequence ID" value="AT2G43580.1"/>
    <property type="gene ID" value="AT2G43580"/>
</dbReference>
<dbReference type="GeneID" id="818960"/>
<dbReference type="Gramene" id="AT2G43580.1">
    <property type="protein sequence ID" value="AT2G43580.1"/>
    <property type="gene ID" value="AT2G43580"/>
</dbReference>
<dbReference type="KEGG" id="ath:AT2G43580"/>
<dbReference type="Araport" id="AT2G43580"/>
<dbReference type="TAIR" id="AT2G43580"/>
<dbReference type="eggNOG" id="KOG4742">
    <property type="taxonomic scope" value="Eukaryota"/>
</dbReference>
<dbReference type="HOGENOM" id="CLU_045506_1_1_1"/>
<dbReference type="InParanoid" id="O24598"/>
<dbReference type="OMA" id="DYCDETR"/>
<dbReference type="PhylomeDB" id="O24598"/>
<dbReference type="BioCyc" id="ARA:AT2G43580-MONOMER"/>
<dbReference type="PRO" id="PR:O24598"/>
<dbReference type="Proteomes" id="UP000006548">
    <property type="component" value="Chromosome 2"/>
</dbReference>
<dbReference type="ExpressionAtlas" id="O24598">
    <property type="expression patterns" value="baseline and differential"/>
</dbReference>
<dbReference type="GO" id="GO:0008061">
    <property type="term" value="F:chitin binding"/>
    <property type="evidence" value="ECO:0007669"/>
    <property type="project" value="UniProtKB-KW"/>
</dbReference>
<dbReference type="GO" id="GO:0008843">
    <property type="term" value="F:endochitinase activity"/>
    <property type="evidence" value="ECO:0007669"/>
    <property type="project" value="UniProtKB-EC"/>
</dbReference>
<dbReference type="GO" id="GO:0016998">
    <property type="term" value="P:cell wall macromolecule catabolic process"/>
    <property type="evidence" value="ECO:0007669"/>
    <property type="project" value="InterPro"/>
</dbReference>
<dbReference type="GO" id="GO:0006032">
    <property type="term" value="P:chitin catabolic process"/>
    <property type="evidence" value="ECO:0007669"/>
    <property type="project" value="UniProtKB-KW"/>
</dbReference>
<dbReference type="GO" id="GO:0006952">
    <property type="term" value="P:defense response"/>
    <property type="evidence" value="ECO:0007669"/>
    <property type="project" value="UniProtKB-KW"/>
</dbReference>
<dbReference type="GO" id="GO:0000272">
    <property type="term" value="P:polysaccharide catabolic process"/>
    <property type="evidence" value="ECO:0007669"/>
    <property type="project" value="UniProtKB-KW"/>
</dbReference>
<dbReference type="GO" id="GO:0009620">
    <property type="term" value="P:response to fungus"/>
    <property type="evidence" value="ECO:0000270"/>
    <property type="project" value="UniProtKB"/>
</dbReference>
<dbReference type="CDD" id="cd00325">
    <property type="entry name" value="chitinase_GH19"/>
    <property type="match status" value="1"/>
</dbReference>
<dbReference type="CDD" id="cd00035">
    <property type="entry name" value="ChtBD1"/>
    <property type="match status" value="1"/>
</dbReference>
<dbReference type="FunFam" id="3.30.20.10:FF:000001">
    <property type="entry name" value="Endochitinase (Chitinase)"/>
    <property type="match status" value="1"/>
</dbReference>
<dbReference type="FunFam" id="3.30.60.10:FF:000004">
    <property type="entry name" value="Endochitinase At2g43590"/>
    <property type="match status" value="1"/>
</dbReference>
<dbReference type="Gene3D" id="1.10.530.10">
    <property type="match status" value="1"/>
</dbReference>
<dbReference type="Gene3D" id="3.30.20.10">
    <property type="entry name" value="Endochitinase, domain 2"/>
    <property type="match status" value="1"/>
</dbReference>
<dbReference type="Gene3D" id="3.30.60.10">
    <property type="entry name" value="Endochitinase-like"/>
    <property type="match status" value="1"/>
</dbReference>
<dbReference type="InterPro" id="IPR001002">
    <property type="entry name" value="Chitin-bd_1"/>
</dbReference>
<dbReference type="InterPro" id="IPR018371">
    <property type="entry name" value="Chitin-binding_1_CS"/>
</dbReference>
<dbReference type="InterPro" id="IPR036861">
    <property type="entry name" value="Endochitinase-like_sf"/>
</dbReference>
<dbReference type="InterPro" id="IPR016283">
    <property type="entry name" value="Glyco_hydro_19"/>
</dbReference>
<dbReference type="InterPro" id="IPR000726">
    <property type="entry name" value="Glyco_hydro_19_cat"/>
</dbReference>
<dbReference type="InterPro" id="IPR023346">
    <property type="entry name" value="Lysozyme-like_dom_sf"/>
</dbReference>
<dbReference type="PANTHER" id="PTHR22595:SF178">
    <property type="entry name" value="(RAPE) HYPOTHETICAL PROTEIN"/>
    <property type="match status" value="1"/>
</dbReference>
<dbReference type="PANTHER" id="PTHR22595">
    <property type="entry name" value="CHITINASE-RELATED"/>
    <property type="match status" value="1"/>
</dbReference>
<dbReference type="Pfam" id="PF00187">
    <property type="entry name" value="Chitin_bind_1"/>
    <property type="match status" value="1"/>
</dbReference>
<dbReference type="Pfam" id="PF00182">
    <property type="entry name" value="Glyco_hydro_19"/>
    <property type="match status" value="1"/>
</dbReference>
<dbReference type="PIRSF" id="PIRSF001060">
    <property type="entry name" value="Endochitinase"/>
    <property type="match status" value="1"/>
</dbReference>
<dbReference type="PRINTS" id="PR00451">
    <property type="entry name" value="CHITINBINDNG"/>
</dbReference>
<dbReference type="SMART" id="SM00270">
    <property type="entry name" value="ChtBD1"/>
    <property type="match status" value="1"/>
</dbReference>
<dbReference type="SUPFAM" id="SSF53955">
    <property type="entry name" value="Lysozyme-like"/>
    <property type="match status" value="1"/>
</dbReference>
<dbReference type="SUPFAM" id="SSF57016">
    <property type="entry name" value="Plant lectins/antimicrobial peptides"/>
    <property type="match status" value="1"/>
</dbReference>
<dbReference type="PROSITE" id="PS00026">
    <property type="entry name" value="CHIT_BIND_I_1"/>
    <property type="match status" value="1"/>
</dbReference>
<dbReference type="PROSITE" id="PS50941">
    <property type="entry name" value="CHIT_BIND_I_2"/>
    <property type="match status" value="1"/>
</dbReference>
<dbReference type="PROSITE" id="PS00773">
    <property type="entry name" value="CHITINASE_19_1"/>
    <property type="match status" value="1"/>
</dbReference>
<dbReference type="PROSITE" id="PS00774">
    <property type="entry name" value="CHITINASE_19_2"/>
    <property type="match status" value="1"/>
</dbReference>
<comment type="catalytic activity">
    <reaction evidence="1">
        <text>Random endo-hydrolysis of N-acetyl-beta-D-glucosaminide (1-&gt;4)-beta-linkages in chitin and chitodextrins.</text>
        <dbReference type="EC" id="3.2.1.14"/>
    </reaction>
</comment>
<comment type="induction">
    <text evidence="5">Accumulates during Botrytis cinerea infection.</text>
</comment>
<comment type="similarity">
    <text evidence="6">Belongs to the glycosyl hydrolase 19 family. Chitinase class I subfamily.</text>
</comment>
<evidence type="ECO:0000250" key="1">
    <source>
        <dbReference type="UniProtKB" id="P29022"/>
    </source>
</evidence>
<evidence type="ECO:0000255" key="2"/>
<evidence type="ECO:0000255" key="3">
    <source>
        <dbReference type="PROSITE-ProRule" id="PRU00261"/>
    </source>
</evidence>
<evidence type="ECO:0000255" key="4">
    <source>
        <dbReference type="PROSITE-ProRule" id="PRU00498"/>
    </source>
</evidence>
<evidence type="ECO:0000269" key="5">
    <source>
    </source>
</evidence>
<evidence type="ECO:0000305" key="6"/>
<evidence type="ECO:0000312" key="7">
    <source>
        <dbReference type="EMBL" id="AEC10292.1"/>
    </source>
</evidence>
<evidence type="ECO:0000312" key="8">
    <source>
        <dbReference type="Proteomes" id="UP000006548"/>
    </source>
</evidence>
<reference key="1">
    <citation type="journal article" date="1999" name="Nature">
        <title>Sequence and analysis of chromosome 2 of the plant Arabidopsis thaliana.</title>
        <authorList>
            <person name="Lin X."/>
            <person name="Kaul S."/>
            <person name="Rounsley S.D."/>
            <person name="Shea T.P."/>
            <person name="Benito M.-I."/>
            <person name="Town C.D."/>
            <person name="Fujii C.Y."/>
            <person name="Mason T.M."/>
            <person name="Bowman C.L."/>
            <person name="Barnstead M.E."/>
            <person name="Feldblyum T.V."/>
            <person name="Buell C.R."/>
            <person name="Ketchum K.A."/>
            <person name="Lee J.J."/>
            <person name="Ronning C.M."/>
            <person name="Koo H.L."/>
            <person name="Moffat K.S."/>
            <person name="Cronin L.A."/>
            <person name="Shen M."/>
            <person name="Pai G."/>
            <person name="Van Aken S."/>
            <person name="Umayam L."/>
            <person name="Tallon L.J."/>
            <person name="Gill J.E."/>
            <person name="Adams M.D."/>
            <person name="Carrera A.J."/>
            <person name="Creasy T.H."/>
            <person name="Goodman H.M."/>
            <person name="Somerville C.R."/>
            <person name="Copenhaver G.P."/>
            <person name="Preuss D."/>
            <person name="Nierman W.C."/>
            <person name="White O."/>
            <person name="Eisen J.A."/>
            <person name="Salzberg S.L."/>
            <person name="Fraser C.M."/>
            <person name="Venter J.C."/>
        </authorList>
    </citation>
    <scope>NUCLEOTIDE SEQUENCE [LARGE SCALE GENOMIC DNA]</scope>
    <source>
        <strain>cv. Columbia</strain>
    </source>
</reference>
<reference key="2">
    <citation type="journal article" date="2017" name="Plant J.">
        <title>Araport11: a complete reannotation of the Arabidopsis thaliana reference genome.</title>
        <authorList>
            <person name="Cheng C.Y."/>
            <person name="Krishnakumar V."/>
            <person name="Chan A.P."/>
            <person name="Thibaud-Nissen F."/>
            <person name="Schobel S."/>
            <person name="Town C.D."/>
        </authorList>
    </citation>
    <scope>GENOME REANNOTATION</scope>
    <source>
        <strain>cv. Columbia</strain>
    </source>
</reference>
<reference key="3">
    <citation type="journal article" date="2002" name="Science">
        <title>Functional annotation of a full-length Arabidopsis cDNA collection.</title>
        <authorList>
            <person name="Seki M."/>
            <person name="Narusaka M."/>
            <person name="Kamiya A."/>
            <person name="Ishida J."/>
            <person name="Satou M."/>
            <person name="Sakurai T."/>
            <person name="Nakajima M."/>
            <person name="Enju A."/>
            <person name="Akiyama K."/>
            <person name="Oono Y."/>
            <person name="Muramatsu M."/>
            <person name="Hayashizaki Y."/>
            <person name="Kawai J."/>
            <person name="Carninci P."/>
            <person name="Itoh M."/>
            <person name="Ishii Y."/>
            <person name="Arakawa T."/>
            <person name="Shibata K."/>
            <person name="Shinagawa A."/>
            <person name="Shinozaki K."/>
        </authorList>
    </citation>
    <scope>NUCLEOTIDE SEQUENCE [LARGE SCALE MRNA]</scope>
    <source>
        <strain>cv. Columbia</strain>
    </source>
</reference>
<reference key="4">
    <citation type="journal article" date="2003" name="Science">
        <title>Empirical analysis of transcriptional activity in the Arabidopsis genome.</title>
        <authorList>
            <person name="Yamada K."/>
            <person name="Lim J."/>
            <person name="Dale J.M."/>
            <person name="Chen H."/>
            <person name="Shinn P."/>
            <person name="Palm C.J."/>
            <person name="Southwick A.M."/>
            <person name="Wu H.C."/>
            <person name="Kim C.J."/>
            <person name="Nguyen M."/>
            <person name="Pham P.K."/>
            <person name="Cheuk R.F."/>
            <person name="Karlin-Newmann G."/>
            <person name="Liu S.X."/>
            <person name="Lam B."/>
            <person name="Sakano H."/>
            <person name="Wu T."/>
            <person name="Yu G."/>
            <person name="Miranda M."/>
            <person name="Quach H.L."/>
            <person name="Tripp M."/>
            <person name="Chang C.H."/>
            <person name="Lee J.M."/>
            <person name="Toriumi M.J."/>
            <person name="Chan M.M."/>
            <person name="Tang C.C."/>
            <person name="Onodera C.S."/>
            <person name="Deng J.M."/>
            <person name="Akiyama K."/>
            <person name="Ansari Y."/>
            <person name="Arakawa T."/>
            <person name="Banh J."/>
            <person name="Banno F."/>
            <person name="Bowser L."/>
            <person name="Brooks S.Y."/>
            <person name="Carninci P."/>
            <person name="Chao Q."/>
            <person name="Choy N."/>
            <person name="Enju A."/>
            <person name="Goldsmith A.D."/>
            <person name="Gurjal M."/>
            <person name="Hansen N.F."/>
            <person name="Hayashizaki Y."/>
            <person name="Johnson-Hopson C."/>
            <person name="Hsuan V.W."/>
            <person name="Iida K."/>
            <person name="Karnes M."/>
            <person name="Khan S."/>
            <person name="Koesema E."/>
            <person name="Ishida J."/>
            <person name="Jiang P.X."/>
            <person name="Jones T."/>
            <person name="Kawai J."/>
            <person name="Kamiya A."/>
            <person name="Meyers C."/>
            <person name="Nakajima M."/>
            <person name="Narusaka M."/>
            <person name="Seki M."/>
            <person name="Sakurai T."/>
            <person name="Satou M."/>
            <person name="Tamse R."/>
            <person name="Vaysberg M."/>
            <person name="Wallender E.K."/>
            <person name="Wong C."/>
            <person name="Yamamura Y."/>
            <person name="Yuan S."/>
            <person name="Shinozaki K."/>
            <person name="Davis R.W."/>
            <person name="Theologis A."/>
            <person name="Ecker J.R."/>
        </authorList>
    </citation>
    <scope>NUCLEOTIDE SEQUENCE [LARGE SCALE MRNA]</scope>
    <source>
        <strain>cv. Columbia</strain>
    </source>
</reference>
<reference key="5">
    <citation type="journal article" date="2001" name="Planta">
        <title>Expression pattern of the Arabidopsis thaliana AtEP3/AtchitIV endochitinase gene.</title>
        <authorList>
            <person name="Passarinho P.A."/>
            <person name="Van Hengel A.J."/>
            <person name="Fransz P.F."/>
            <person name="de Vries S.C."/>
        </authorList>
    </citation>
    <scope>GENE FAMILY</scope>
</reference>
<reference key="6">
    <citation type="journal article" date="2006" name="Plant J.">
        <title>Arabidopsis WRKY33 transcription factor is required for resistance to necrotrophic fungal pathogens.</title>
        <authorList>
            <person name="Zheng Z."/>
            <person name="Qamar S.A."/>
            <person name="Chen Z."/>
            <person name="Mengiste T."/>
        </authorList>
    </citation>
    <scope>INDUCTION BY BOTRYTIS</scope>
    <source>
        <strain>cv. Columbia</strain>
    </source>
</reference>
<keyword id="KW-0119">Carbohydrate metabolism</keyword>
<keyword id="KW-0146">Chitin degradation</keyword>
<keyword id="KW-0147">Chitin-binding</keyword>
<keyword id="KW-1015">Disulfide bond</keyword>
<keyword id="KW-0325">Glycoprotein</keyword>
<keyword id="KW-0326">Glycosidase</keyword>
<keyword id="KW-0378">Hydrolase</keyword>
<keyword id="KW-0611">Plant defense</keyword>
<keyword id="KW-0624">Polysaccharide degradation</keyword>
<keyword id="KW-1185">Reference proteome</keyword>
<keyword id="KW-0732">Signal</keyword>
<name>CHI58_ARATH</name>
<proteinExistence type="evidence at transcript level"/>
<feature type="signal peptide" evidence="2">
    <location>
        <begin position="1"/>
        <end position="24"/>
    </location>
</feature>
<feature type="chain" id="PRO_0000433912" description="Endochitinase At2g43580" evidence="2">
    <location>
        <begin position="25"/>
        <end position="265"/>
    </location>
</feature>
<feature type="domain" description="Chitin-binding type-1" evidence="3">
    <location>
        <begin position="25"/>
        <end position="59"/>
    </location>
</feature>
<feature type="region of interest" description="Catalytic" evidence="1">
    <location>
        <begin position="67"/>
        <end position="265"/>
    </location>
</feature>
<feature type="active site" description="Proton donor" evidence="1">
    <location>
        <position position="129"/>
    </location>
</feature>
<feature type="glycosylation site" description="N-linked (GlcNAc...) asparagine" evidence="4">
    <location>
        <position position="102"/>
    </location>
</feature>
<feature type="glycosylation site" description="N-linked (GlcNAc...) asparagine" evidence="4">
    <location>
        <position position="262"/>
    </location>
</feature>
<feature type="disulfide bond" evidence="3">
    <location>
        <begin position="27"/>
        <end position="35"/>
    </location>
</feature>
<feature type="disulfide bond" evidence="3">
    <location>
        <begin position="29"/>
        <end position="41"/>
    </location>
</feature>
<feature type="disulfide bond" evidence="3">
    <location>
        <begin position="34"/>
        <end position="48"/>
    </location>
</feature>
<feature type="disulfide bond" evidence="3">
    <location>
        <begin position="52"/>
        <end position="57"/>
    </location>
</feature>
<accession>O24598</accession>
<protein>
    <recommendedName>
        <fullName evidence="6">Endochitinase At2g43580</fullName>
        <ecNumber>3.2.1.14</ecNumber>
    </recommendedName>
</protein>
<sequence length="265" mass="28781">MALTKIFLILLLSLLGLYSETVKSQNCDCAPNLCCSQFGYCGTTADYCGSTCQSGPCRVGGPPTGAGLVGNIVTQIFFNNIINQAGNGCAGKSFYTRDSFINATNTFPSFANTVTRREIATMFAHFTYETGHFCYIEEINGASRVMCDQNNRQYPCAPAKSYHGRGPLLLSWNFNYGACGQSLGLDLLRQPELVSSNPVVAFRTALWFWMKSVRPVLNQGFGATIRAISGFDCDGRNLGGVNARIGYYRDYCGQLGLDPGANITC</sequence>
<gene>
    <name evidence="7" type="ordered locus">At2g43580</name>
</gene>